<accession>P07297</accession>
<accession>Q2LD55</accession>
<accession>Q2LD56</accession>
<accession>Q84374</accession>
<name>CAPSD_PAVBP</name>
<organism>
    <name type="scientific">Bovine parvovirus 1</name>
    <name type="common">BPV-1</name>
    <dbReference type="NCBI Taxonomy" id="2839036"/>
    <lineage>
        <taxon>Viruses</taxon>
        <taxon>Monodnaviria</taxon>
        <taxon>Shotokuvirae</taxon>
        <taxon>Cossaviricota</taxon>
        <taxon>Quintoviricetes</taxon>
        <taxon>Piccovirales</taxon>
        <taxon>Parvoviridae</taxon>
        <taxon>Parvovirinae</taxon>
        <taxon>Bocaparvovirus</taxon>
        <taxon>Bocaparvovirus ungulate1</taxon>
    </lineage>
</organism>
<evidence type="ECO:0000250" key="1">
    <source>
        <dbReference type="UniProtKB" id="Q3YPH4"/>
    </source>
</evidence>
<evidence type="ECO:0000250" key="2">
    <source>
        <dbReference type="UniProtKB" id="Q9PZT0"/>
    </source>
</evidence>
<evidence type="ECO:0000256" key="3">
    <source>
        <dbReference type="SAM" id="MobiDB-lite"/>
    </source>
</evidence>
<evidence type="ECO:0000305" key="4"/>
<evidence type="ECO:0000305" key="5">
    <source>
    </source>
</evidence>
<feature type="chain" id="PRO_0000039421" description="Minor capsid protein VP1">
    <location>
        <begin position="1"/>
        <end position="673"/>
    </location>
</feature>
<feature type="region of interest" description="Phospholipase A2-like" evidence="1">
    <location>
        <begin position="13"/>
        <end position="68"/>
    </location>
</feature>
<feature type="region of interest" description="Disordered" evidence="3">
    <location>
        <begin position="118"/>
        <end position="151"/>
    </location>
</feature>
<feature type="short sequence motif" description="Nuclear localization signal" evidence="2">
    <location>
        <begin position="623"/>
        <end position="634"/>
    </location>
</feature>
<feature type="compositionally biased region" description="Polar residues" evidence="3">
    <location>
        <begin position="130"/>
        <end position="144"/>
    </location>
</feature>
<feature type="splice variant" id="VSP_059852" description="In isoform Major capsid protein VP3.">
    <location>
        <begin position="1"/>
        <end position="137"/>
    </location>
</feature>
<feature type="splice variant" id="VSP_059853" description="In isoform Minor capsid protein VP2.">
    <location>
        <begin position="1"/>
        <end position="91"/>
    </location>
</feature>
<feature type="splice variant" id="VSP_059867" description="In isoform Minor capsid protein VP2.">
    <original>A</original>
    <variation>M</variation>
    <location>
        <position position="92"/>
    </location>
</feature>
<dbReference type="EC" id="3.1.1.4" evidence="1"/>
<dbReference type="EMBL" id="M14363">
    <property type="protein sequence ID" value="AAB59848.1"/>
    <property type="status" value="ALT_SEQ"/>
    <property type="molecule type" value="Genomic_DNA"/>
</dbReference>
<dbReference type="EMBL" id="M14363">
    <property type="protein sequence ID" value="AAB59849.1"/>
    <property type="status" value="ALT_SEQ"/>
    <property type="molecule type" value="Genomic_DNA"/>
</dbReference>
<dbReference type="EMBL" id="DQ335247">
    <property type="protein sequence ID" value="ABC69729.1"/>
    <property type="molecule type" value="Genomic_DNA"/>
</dbReference>
<dbReference type="EMBL" id="DQ335247">
    <property type="protein sequence ID" value="ABC69731.1"/>
    <property type="molecule type" value="Genomic_DNA"/>
</dbReference>
<dbReference type="PIR" id="A26104">
    <property type="entry name" value="VCPVB5"/>
</dbReference>
<dbReference type="RefSeq" id="NP_041404.1">
    <property type="nucleotide sequence ID" value="NC_001540.1"/>
</dbReference>
<dbReference type="RefSeq" id="NP_041406.1">
    <property type="nucleotide sequence ID" value="NC_001540.1"/>
</dbReference>
<dbReference type="RefSeq" id="YP_009508183.1">
    <molecule id="P07297-1"/>
    <property type="nucleotide sequence ID" value="NC_038895.1"/>
</dbReference>
<dbReference type="RefSeq" id="YP_009508184.1">
    <molecule id="P07297-3"/>
    <property type="nucleotide sequence ID" value="NC_038895.1"/>
</dbReference>
<dbReference type="SMR" id="P07297"/>
<dbReference type="GeneID" id="1489584"/>
<dbReference type="GeneID" id="1489585"/>
<dbReference type="GeneID" id="37619503"/>
<dbReference type="KEGG" id="vg:1489584"/>
<dbReference type="KEGG" id="vg:1489585"/>
<dbReference type="OrthoDB" id="1726at10239"/>
<dbReference type="Proteomes" id="UP000007022">
    <property type="component" value="Segment"/>
</dbReference>
<dbReference type="Proteomes" id="UP000170734">
    <property type="component" value="Segment"/>
</dbReference>
<dbReference type="GO" id="GO:0043657">
    <property type="term" value="C:host cell"/>
    <property type="evidence" value="ECO:0007669"/>
    <property type="project" value="GOC"/>
</dbReference>
<dbReference type="GO" id="GO:0030430">
    <property type="term" value="C:host cell cytoplasm"/>
    <property type="evidence" value="ECO:0007669"/>
    <property type="project" value="UniProtKB-SubCell"/>
</dbReference>
<dbReference type="GO" id="GO:0042025">
    <property type="term" value="C:host cell nucleus"/>
    <property type="evidence" value="ECO:0007669"/>
    <property type="project" value="UniProtKB-SubCell"/>
</dbReference>
<dbReference type="GO" id="GO:0039615">
    <property type="term" value="C:T=1 icosahedral viral capsid"/>
    <property type="evidence" value="ECO:0007669"/>
    <property type="project" value="UniProtKB-KW"/>
</dbReference>
<dbReference type="GO" id="GO:0046872">
    <property type="term" value="F:metal ion binding"/>
    <property type="evidence" value="ECO:0007669"/>
    <property type="project" value="UniProtKB-KW"/>
</dbReference>
<dbReference type="GO" id="GO:0004623">
    <property type="term" value="F:phospholipase A2 activity"/>
    <property type="evidence" value="ECO:0007669"/>
    <property type="project" value="UniProtKB-EC"/>
</dbReference>
<dbReference type="GO" id="GO:0005198">
    <property type="term" value="F:structural molecule activity"/>
    <property type="evidence" value="ECO:0007669"/>
    <property type="project" value="InterPro"/>
</dbReference>
<dbReference type="GO" id="GO:0075512">
    <property type="term" value="P:clathrin-dependent endocytosis of virus by host cell"/>
    <property type="evidence" value="ECO:0007669"/>
    <property type="project" value="UniProtKB-KW"/>
</dbReference>
<dbReference type="GO" id="GO:0016042">
    <property type="term" value="P:lipid catabolic process"/>
    <property type="evidence" value="ECO:0007669"/>
    <property type="project" value="UniProtKB-KW"/>
</dbReference>
<dbReference type="GO" id="GO:0075521">
    <property type="term" value="P:microtubule-dependent intracellular transport of viral material towards nucleus"/>
    <property type="evidence" value="ECO:0007669"/>
    <property type="project" value="UniProtKB-KW"/>
</dbReference>
<dbReference type="GO" id="GO:0140267">
    <property type="term" value="P:symbiont entry into host cell via permeabilization of host membrane"/>
    <property type="evidence" value="ECO:0007669"/>
    <property type="project" value="UniProtKB-KW"/>
</dbReference>
<dbReference type="GO" id="GO:0075732">
    <property type="term" value="P:viral penetration into host nucleus"/>
    <property type="evidence" value="ECO:0007669"/>
    <property type="project" value="UniProtKB-KW"/>
</dbReference>
<dbReference type="GO" id="GO:0019062">
    <property type="term" value="P:virion attachment to host cell"/>
    <property type="evidence" value="ECO:0007669"/>
    <property type="project" value="UniProtKB-KW"/>
</dbReference>
<dbReference type="Gene3D" id="2.170.30.10">
    <property type="entry name" value="Parvovirus coat protein VP1/VP2"/>
    <property type="match status" value="1"/>
</dbReference>
<dbReference type="InterPro" id="IPR016184">
    <property type="entry name" value="Capsid/spike_ssDNA_virus"/>
</dbReference>
<dbReference type="InterPro" id="IPR001403">
    <property type="entry name" value="Parvovirus_coat"/>
</dbReference>
<dbReference type="InterPro" id="IPR013607">
    <property type="entry name" value="Phospholipase_A2-like"/>
</dbReference>
<dbReference type="InterPro" id="IPR036952">
    <property type="entry name" value="VP1/VP2"/>
</dbReference>
<dbReference type="Pfam" id="PF00740">
    <property type="entry name" value="Parvo_coat"/>
    <property type="match status" value="2"/>
</dbReference>
<dbReference type="Pfam" id="PF08398">
    <property type="entry name" value="Phospholip_A2_4"/>
    <property type="match status" value="1"/>
</dbReference>
<dbReference type="SUPFAM" id="SSF88645">
    <property type="entry name" value="ssDNA viruses"/>
    <property type="match status" value="1"/>
</dbReference>
<sequence length="673" mass="74542">MPPTNKANSKKGLTLPGYNYLGPFNSLFAGAPVNKADAAARKHDFGYSDLLKEGKNPYLYFNTHDQNLIDELKDDTSFGGKLARGVFQIKKALAPALPGTSKGGDKALKRKLYFARSNKGAKKANREPAPSTSNQQNMEVSNDIPNDEAGNQPIELATRSVGGSGSVGGGGRGGSGVGYSTGGWTGGTIFSENIVVTKNTRQFICDIKNGHLYKSEVLNTGDTAHRQYAITTPWSYFNFNQYSSHFSPNDWQHLVNDYERFRPKAMIVRVYNLQIKQIMTDGAMGTVYNNDLTAGMHIFCDGDHRYPYVQHPWDDQCMPELPNSIWELPQYAYIPAPISVVDNNTTNTVEEHLLKGVPLYMLENSDHEVLRTGESTEFTFNFGDCEWIENNITFSMPQMMYNPLVRSRRIYSYSGPNNQTSNAFQNAALRTSNWMSGPGIARGTHNATLQTQSAGALVTMVTNGADVSGVGAVRVGYSTDPIYGGQQPDSDLLRLRYSASAAEGQQNPILENAARHTFTREARTKLITGSNGADGNYKEWWMLPNQMWDSAPISRYNPIWVKVPRVNRKTLLDTQDGSIPMSHPPGTIFIKLARIPVPGNGDSFLNIYVTGQVSCEVVWEVEKRGTKNWRPEYMHSATNMSVDAYTINNAGVYAGAVQNADVMQTRFNHHKVL</sequence>
<keyword id="KW-0024">Alternative initiation</keyword>
<keyword id="KW-0167">Capsid protein</keyword>
<keyword id="KW-1165">Clathrin-mediated endocytosis of virus by host</keyword>
<keyword id="KW-1176">Cytoplasmic inwards viral transport</keyword>
<keyword id="KW-1035">Host cytoplasm</keyword>
<keyword id="KW-1048">Host nucleus</keyword>
<keyword id="KW-0945">Host-virus interaction</keyword>
<keyword id="KW-0378">Hydrolase</keyword>
<keyword id="KW-0442">Lipid degradation</keyword>
<keyword id="KW-0443">Lipid metabolism</keyword>
<keyword id="KW-0460">Magnesium</keyword>
<keyword id="KW-0479">Metal-binding</keyword>
<keyword id="KW-1177">Microtubular inwards viral transport</keyword>
<keyword id="KW-1185">Reference proteome</keyword>
<keyword id="KW-1140">T=1 icosahedral capsid protein</keyword>
<keyword id="KW-1161">Viral attachment to host cell</keyword>
<keyword id="KW-1162">Viral penetration into host cytoplasm</keyword>
<keyword id="KW-1163">Viral penetration into host nucleus</keyword>
<keyword id="KW-1173">Viral penetration via permeabilization of host membrane</keyword>
<keyword id="KW-0946">Virion</keyword>
<keyword id="KW-1164">Virus endocytosis by host</keyword>
<keyword id="KW-1160">Virus entry into host cell</keyword>
<reference key="1">
    <citation type="journal article" date="1986" name="J. Virol.">
        <title>Complete nucleotide sequence and genome organization of bovine parvovirus.</title>
        <authorList>
            <person name="Chen K.C."/>
            <person name="Shull B.C."/>
            <person name="Moses E.A."/>
            <person name="Lederman M."/>
            <person name="Stout E.R."/>
            <person name="Bates R.C."/>
        </authorList>
    </citation>
    <scope>NUCLEOTIDE SEQUENCE [GENOMIC DNA] (ISOFORMS MINOR CAPSID PROTEIN VP1 AND MINOR CAPSID PROTEIN VP2)</scope>
</reference>
<reference key="2">
    <citation type="journal article" date="2007" name="J. Virol.">
        <title>The transcription profile of the bocavirus bovine parvovirus is unlike those of previously characterized parvoviruses.</title>
        <authorList>
            <person name="Qiu J."/>
            <person name="Cheng F."/>
            <person name="Johnson F.B."/>
            <person name="Pintel D."/>
        </authorList>
    </citation>
    <scope>NUCLEOTIDE SEQUENCE [LARGE SCALE GENOMIC DNA] (ISOFORMS MINOR CAPSID PROTEIN VP1 AND MAJOR CAPSID PROTEIN VP3)</scope>
</reference>
<reference key="3">
    <citation type="journal article" date="2010" name="J. Gen. Virol.">
        <title>Bovine parvovirus uses clathrin-mediated endocytosis for cell entry.</title>
        <authorList>
            <person name="Dudleenamjil E."/>
            <person name="Lin C.Y."/>
            <person name="Dredge D."/>
            <person name="Murray B.K."/>
            <person name="Robison R.A."/>
            <person name="Johnson F.B."/>
        </authorList>
    </citation>
    <scope>FUNCTION</scope>
</reference>
<proteinExistence type="inferred from homology"/>
<comment type="function">
    <text evidence="1 2">Capsid proteins self-assembles to form an icosahedral capsid with a T=1 symmetry, about 26 nm in diameter, and consisting of 60 copies of three size variants of the capsid proteins, VP1, and VP3, which differ by the presence of an N-terminal extension in the minor protein VP1. The capsid has a channel at the 5-fold axis and there are densities extending the 5-fold axis into the interior of the capsid. The capsid encapsulates the genomic ssDNA (By similarity). Binding to the host receptors also induces capsid rearrangements leading to surface exposure of VP1 N-terminus, specifically its phospholipase A2-like region. The additional N-terminal region of isoform Minor capsid protein VP1, called VP1u, may serve as a lipolytic enzyme to breach the endosomal membrane during entry into host cell and might contribute to virus transport to the nucleus (By similarity).</text>
</comment>
<comment type="catalytic activity">
    <reaction evidence="1">
        <text>a 1,2-diacyl-sn-glycero-3-phosphocholine + H2O = a 1-acyl-sn-glycero-3-phosphocholine + a fatty acid + H(+)</text>
        <dbReference type="Rhea" id="RHEA:15801"/>
        <dbReference type="ChEBI" id="CHEBI:15377"/>
        <dbReference type="ChEBI" id="CHEBI:15378"/>
        <dbReference type="ChEBI" id="CHEBI:28868"/>
        <dbReference type="ChEBI" id="CHEBI:57643"/>
        <dbReference type="ChEBI" id="CHEBI:58168"/>
        <dbReference type="EC" id="3.1.1.4"/>
    </reaction>
</comment>
<comment type="subunit">
    <molecule>Isoform Minor capsid protein VP1</molecule>
    <text evidence="1">Heteromultimer of isoform Minor capsid protein VP1, isoform Minor capsid protein VP2 and isoform Major capsid protein VP3 (By similarity).</text>
</comment>
<comment type="subunit">
    <molecule>Isoform Minor capsid protein VP2</molecule>
    <text evidence="1">Heteromultimer of isoform Minor capsid protein VP1, isoform Minor capsid protein VP2 and isoform Major capsid protein VP3 (By similarity).</text>
</comment>
<comment type="subunit">
    <molecule>Isoform Major capsid protein VP3</molecule>
    <text evidence="1">Homomultimer (By similarity). 10 fold more abundant than the minor capsid proteins VP1 and VP2 (By similarity). Heteromultimer of isoform Minor capsid protein VP1, isoform Minor capsid protein VP2 and isoform Major capsid protein VP3 (By similarity).</text>
</comment>
<comment type="subcellular location">
    <molecule>Isoform Minor capsid protein VP1</molecule>
    <subcellularLocation>
        <location evidence="1">Virion</location>
    </subcellularLocation>
    <subcellularLocation>
        <location evidence="1">Host nucleus</location>
    </subcellularLocation>
    <subcellularLocation>
        <location evidence="1">Host cytoplasm</location>
    </subcellularLocation>
    <text evidence="1">Slightly detected in the cytoplasm, mainly seen in the nucleus.</text>
</comment>
<comment type="subcellular location">
    <molecule>Isoform Minor capsid protein VP2</molecule>
    <subcellularLocation>
        <location evidence="1">Virion</location>
    </subcellularLocation>
</comment>
<comment type="subcellular location">
    <molecule>Isoform Major capsid protein VP3</molecule>
    <subcellularLocation>
        <location evidence="1">Virion</location>
    </subcellularLocation>
    <subcellularLocation>
        <location evidence="1">Host nucleus</location>
    </subcellularLocation>
    <subcellularLocation>
        <location evidence="1">Host cytoplasm</location>
    </subcellularLocation>
    <text evidence="1">Slightly detected in the cytoplasm, mainly seen in the nucleus.</text>
</comment>
<comment type="alternative products">
    <event type="alternative initiation"/>
    <isoform>
        <id>P07297-1</id>
        <name>Minor capsid protein VP1</name>
        <sequence type="displayed"/>
    </isoform>
    <isoform>
        <id>P07297-2</id>
        <name>Minor capsid protein VP2</name>
        <sequence type="described" ref="VSP_059853 VSP_059867"/>
    </isoform>
    <isoform>
        <id>P07297-3</id>
        <name>Major capsid protein VP3</name>
        <sequence type="described" ref="VSP_059852"/>
    </isoform>
    <text evidence="1">The VP-encoding mRNA generates the three capsid proteins. Minor capsid protein VP1 and Major capsid protein VP3 initiate at canonical initiation site, whereas Minor capsid protein VP2 initiates at a GCT codon (By similarity).</text>
</comment>
<comment type="domain">
    <text evidence="1 2">The N-terminus of Isoform Minor capsid protein VP1, VP1u, contains a phospholipase A2-like region (By similarity). VP1u may play a role in the disruption of host tight junctions in the airway tract (By similarity).</text>
</comment>
<comment type="domain">
    <text evidence="2">A nuclear localization signal is present in the C-terminus and can be recognized by cellular nuclear import molecules. After assembly, it is hidden because it is on the inner capsid surface.</text>
</comment>
<comment type="similarity">
    <text evidence="4">Belongs to the parvoviridae capsid protein family.</text>
</comment>
<comment type="sequence caution" evidence="5">
    <conflict type="miscellaneous discrepancy">
        <sequence resource="EMBL-CDS" id="AAB59848"/>
    </conflict>
</comment>
<comment type="sequence caution" evidence="5">
    <conflict type="miscellaneous discrepancy">
        <sequence resource="EMBL-CDS" id="AAB59849"/>
    </conflict>
</comment>
<organismHost>
    <name type="scientific">Bos taurus</name>
    <name type="common">Bovine</name>
    <dbReference type="NCBI Taxonomy" id="9913"/>
</organismHost>
<protein>
    <recommendedName>
        <fullName>Minor capsid protein VP1</fullName>
        <ecNumber evidence="1">3.1.1.4</ecNumber>
    </recommendedName>
</protein>